<organism>
    <name type="scientific">Mus musculus</name>
    <name type="common">Mouse</name>
    <dbReference type="NCBI Taxonomy" id="10090"/>
    <lineage>
        <taxon>Eukaryota</taxon>
        <taxon>Metazoa</taxon>
        <taxon>Chordata</taxon>
        <taxon>Craniata</taxon>
        <taxon>Vertebrata</taxon>
        <taxon>Euteleostomi</taxon>
        <taxon>Mammalia</taxon>
        <taxon>Eutheria</taxon>
        <taxon>Euarchontoglires</taxon>
        <taxon>Glires</taxon>
        <taxon>Rodentia</taxon>
        <taxon>Myomorpha</taxon>
        <taxon>Muroidea</taxon>
        <taxon>Muridae</taxon>
        <taxon>Murinae</taxon>
        <taxon>Mus</taxon>
        <taxon>Mus</taxon>
    </lineage>
</organism>
<name>F217A_MOUSE</name>
<evidence type="ECO:0000256" key="1">
    <source>
        <dbReference type="SAM" id="MobiDB-lite"/>
    </source>
</evidence>
<evidence type="ECO:0000305" key="2"/>
<protein>
    <recommendedName>
        <fullName>Protein FAM217A</fullName>
    </recommendedName>
</protein>
<keyword id="KW-1185">Reference proteome</keyword>
<gene>
    <name type="primary">Fam217a</name>
</gene>
<proteinExistence type="evidence at transcript level"/>
<sequence length="419" mass="46769">MGRKSNESCSSSLHVSSISQENHSQWNLDAEELFDEKETFSSENDGAAGGKTNKSHLENPAEQLILQLTVSEHAHSRSQQNSSQGVFQLWSSPVNKGSTVDKRNSSVEENVTDESDLSENEKMNDSLLSYFKKMDLNLKPETIEHVERPFPEEAGQVPVYADFLPAPFNTLDLHRFAFSKCESWKAAVEPPESSIERLILRLLELERLQHMTIQRERPRLQSTFYSSMFSMAERPSSSKAIATKAKAPKIPETSTLQTSGVDKNRDKRKNNSGSGKPEQNVSKWSLSSAGKSKSNSRALLKCSSTSKQCAVAHDDLKNSKNSSLNPCQEPPLKPTTTTQATQPMARVVSRCLPPRSPMPVSPIPLSFPENPREEGKVPRTKKKCHRKSILLNRAFYIQKRNCLSPSLIARGKCSPTDQK</sequence>
<dbReference type="EMBL" id="AK006388">
    <property type="protein sequence ID" value="BAB24562.1"/>
    <property type="molecule type" value="mRNA"/>
</dbReference>
<dbReference type="RefSeq" id="NP_082243.1">
    <property type="nucleotide sequence ID" value="NM_027967.1"/>
</dbReference>
<dbReference type="BioGRID" id="214989">
    <property type="interactions" value="1"/>
</dbReference>
<dbReference type="FunCoup" id="Q9D9W6">
    <property type="interactions" value="2"/>
</dbReference>
<dbReference type="iPTMnet" id="Q9D9W6"/>
<dbReference type="PhosphoSitePlus" id="Q9D9W6"/>
<dbReference type="jPOST" id="Q9D9W6"/>
<dbReference type="ProteomicsDB" id="271534"/>
<dbReference type="Antibodypedia" id="44131">
    <property type="antibodies" value="59 antibodies from 14 providers"/>
</dbReference>
<dbReference type="Ensembl" id="ENSMUST00000225242.2">
    <property type="protein sequence ID" value="ENSMUSP00000153128.2"/>
    <property type="gene ID" value="ENSMUSG00000021414.9"/>
</dbReference>
<dbReference type="GeneID" id="71864"/>
<dbReference type="KEGG" id="mmu:71864"/>
<dbReference type="UCSC" id="uc007qbr.1">
    <property type="organism name" value="mouse"/>
</dbReference>
<dbReference type="AGR" id="MGI:1919114"/>
<dbReference type="CTD" id="222826"/>
<dbReference type="MGI" id="MGI:1919114">
    <property type="gene designation" value="Fam217a"/>
</dbReference>
<dbReference type="VEuPathDB" id="HostDB:ENSMUSG00000021414"/>
<dbReference type="eggNOG" id="ENOG502SAD6">
    <property type="taxonomic scope" value="Eukaryota"/>
</dbReference>
<dbReference type="GeneTree" id="ENSGT00940000154543"/>
<dbReference type="InParanoid" id="Q9D9W6"/>
<dbReference type="OrthoDB" id="8763336at2759"/>
<dbReference type="BioGRID-ORCS" id="71864">
    <property type="hits" value="1 hit in 77 CRISPR screens"/>
</dbReference>
<dbReference type="PRO" id="PR:Q9D9W6"/>
<dbReference type="Proteomes" id="UP000000589">
    <property type="component" value="Chromosome 13"/>
</dbReference>
<dbReference type="RNAct" id="Q9D9W6">
    <property type="molecule type" value="protein"/>
</dbReference>
<dbReference type="Bgee" id="ENSMUSG00000021414">
    <property type="expression patterns" value="Expressed in spermatid and 45 other cell types or tissues"/>
</dbReference>
<dbReference type="ExpressionAtlas" id="Q9D9W6">
    <property type="expression patterns" value="baseline and differential"/>
</dbReference>
<dbReference type="InterPro" id="IPR029266">
    <property type="entry name" value="FAM217"/>
</dbReference>
<dbReference type="PANTHER" id="PTHR22145:SF4">
    <property type="entry name" value="PROTEIN FAM217A"/>
    <property type="match status" value="1"/>
</dbReference>
<dbReference type="PANTHER" id="PTHR22145">
    <property type="entry name" value="SI:CH211-266K22.6"/>
    <property type="match status" value="1"/>
</dbReference>
<dbReference type="Pfam" id="PF15344">
    <property type="entry name" value="FAM217"/>
    <property type="match status" value="1"/>
</dbReference>
<feature type="chain" id="PRO_0000089541" description="Protein FAM217A">
    <location>
        <begin position="1"/>
        <end position="419"/>
    </location>
</feature>
<feature type="region of interest" description="Disordered" evidence="1">
    <location>
        <begin position="1"/>
        <end position="60"/>
    </location>
</feature>
<feature type="region of interest" description="Disordered" evidence="1">
    <location>
        <begin position="96"/>
        <end position="119"/>
    </location>
</feature>
<feature type="region of interest" description="Disordered" evidence="1">
    <location>
        <begin position="236"/>
        <end position="299"/>
    </location>
</feature>
<feature type="region of interest" description="Disordered" evidence="1">
    <location>
        <begin position="317"/>
        <end position="382"/>
    </location>
</feature>
<feature type="compositionally biased region" description="Low complexity" evidence="1">
    <location>
        <begin position="7"/>
        <end position="19"/>
    </location>
</feature>
<feature type="compositionally biased region" description="Low complexity" evidence="1">
    <location>
        <begin position="236"/>
        <end position="251"/>
    </location>
</feature>
<feature type="compositionally biased region" description="Polar residues" evidence="1">
    <location>
        <begin position="252"/>
        <end position="261"/>
    </location>
</feature>
<feature type="compositionally biased region" description="Polar residues" evidence="1">
    <location>
        <begin position="271"/>
        <end position="281"/>
    </location>
</feature>
<feature type="compositionally biased region" description="Low complexity" evidence="1">
    <location>
        <begin position="282"/>
        <end position="296"/>
    </location>
</feature>
<feature type="compositionally biased region" description="Low complexity" evidence="1">
    <location>
        <begin position="334"/>
        <end position="345"/>
    </location>
</feature>
<comment type="similarity">
    <text evidence="2">Belongs to the FAM217 family.</text>
</comment>
<reference key="1">
    <citation type="journal article" date="2005" name="Science">
        <title>The transcriptional landscape of the mammalian genome.</title>
        <authorList>
            <person name="Carninci P."/>
            <person name="Kasukawa T."/>
            <person name="Katayama S."/>
            <person name="Gough J."/>
            <person name="Frith M.C."/>
            <person name="Maeda N."/>
            <person name="Oyama R."/>
            <person name="Ravasi T."/>
            <person name="Lenhard B."/>
            <person name="Wells C."/>
            <person name="Kodzius R."/>
            <person name="Shimokawa K."/>
            <person name="Bajic V.B."/>
            <person name="Brenner S.E."/>
            <person name="Batalov S."/>
            <person name="Forrest A.R."/>
            <person name="Zavolan M."/>
            <person name="Davis M.J."/>
            <person name="Wilming L.G."/>
            <person name="Aidinis V."/>
            <person name="Allen J.E."/>
            <person name="Ambesi-Impiombato A."/>
            <person name="Apweiler R."/>
            <person name="Aturaliya R.N."/>
            <person name="Bailey T.L."/>
            <person name="Bansal M."/>
            <person name="Baxter L."/>
            <person name="Beisel K.W."/>
            <person name="Bersano T."/>
            <person name="Bono H."/>
            <person name="Chalk A.M."/>
            <person name="Chiu K.P."/>
            <person name="Choudhary V."/>
            <person name="Christoffels A."/>
            <person name="Clutterbuck D.R."/>
            <person name="Crowe M.L."/>
            <person name="Dalla E."/>
            <person name="Dalrymple B.P."/>
            <person name="de Bono B."/>
            <person name="Della Gatta G."/>
            <person name="di Bernardo D."/>
            <person name="Down T."/>
            <person name="Engstrom P."/>
            <person name="Fagiolini M."/>
            <person name="Faulkner G."/>
            <person name="Fletcher C.F."/>
            <person name="Fukushima T."/>
            <person name="Furuno M."/>
            <person name="Futaki S."/>
            <person name="Gariboldi M."/>
            <person name="Georgii-Hemming P."/>
            <person name="Gingeras T.R."/>
            <person name="Gojobori T."/>
            <person name="Green R.E."/>
            <person name="Gustincich S."/>
            <person name="Harbers M."/>
            <person name="Hayashi Y."/>
            <person name="Hensch T.K."/>
            <person name="Hirokawa N."/>
            <person name="Hill D."/>
            <person name="Huminiecki L."/>
            <person name="Iacono M."/>
            <person name="Ikeo K."/>
            <person name="Iwama A."/>
            <person name="Ishikawa T."/>
            <person name="Jakt M."/>
            <person name="Kanapin A."/>
            <person name="Katoh M."/>
            <person name="Kawasawa Y."/>
            <person name="Kelso J."/>
            <person name="Kitamura H."/>
            <person name="Kitano H."/>
            <person name="Kollias G."/>
            <person name="Krishnan S.P."/>
            <person name="Kruger A."/>
            <person name="Kummerfeld S.K."/>
            <person name="Kurochkin I.V."/>
            <person name="Lareau L.F."/>
            <person name="Lazarevic D."/>
            <person name="Lipovich L."/>
            <person name="Liu J."/>
            <person name="Liuni S."/>
            <person name="McWilliam S."/>
            <person name="Madan Babu M."/>
            <person name="Madera M."/>
            <person name="Marchionni L."/>
            <person name="Matsuda H."/>
            <person name="Matsuzawa S."/>
            <person name="Miki H."/>
            <person name="Mignone F."/>
            <person name="Miyake S."/>
            <person name="Morris K."/>
            <person name="Mottagui-Tabar S."/>
            <person name="Mulder N."/>
            <person name="Nakano N."/>
            <person name="Nakauchi H."/>
            <person name="Ng P."/>
            <person name="Nilsson R."/>
            <person name="Nishiguchi S."/>
            <person name="Nishikawa S."/>
            <person name="Nori F."/>
            <person name="Ohara O."/>
            <person name="Okazaki Y."/>
            <person name="Orlando V."/>
            <person name="Pang K.C."/>
            <person name="Pavan W.J."/>
            <person name="Pavesi G."/>
            <person name="Pesole G."/>
            <person name="Petrovsky N."/>
            <person name="Piazza S."/>
            <person name="Reed J."/>
            <person name="Reid J.F."/>
            <person name="Ring B.Z."/>
            <person name="Ringwald M."/>
            <person name="Rost B."/>
            <person name="Ruan Y."/>
            <person name="Salzberg S.L."/>
            <person name="Sandelin A."/>
            <person name="Schneider C."/>
            <person name="Schoenbach C."/>
            <person name="Sekiguchi K."/>
            <person name="Semple C.A."/>
            <person name="Seno S."/>
            <person name="Sessa L."/>
            <person name="Sheng Y."/>
            <person name="Shibata Y."/>
            <person name="Shimada H."/>
            <person name="Shimada K."/>
            <person name="Silva D."/>
            <person name="Sinclair B."/>
            <person name="Sperling S."/>
            <person name="Stupka E."/>
            <person name="Sugiura K."/>
            <person name="Sultana R."/>
            <person name="Takenaka Y."/>
            <person name="Taki K."/>
            <person name="Tammoja K."/>
            <person name="Tan S.L."/>
            <person name="Tang S."/>
            <person name="Taylor M.S."/>
            <person name="Tegner J."/>
            <person name="Teichmann S.A."/>
            <person name="Ueda H.R."/>
            <person name="van Nimwegen E."/>
            <person name="Verardo R."/>
            <person name="Wei C.L."/>
            <person name="Yagi K."/>
            <person name="Yamanishi H."/>
            <person name="Zabarovsky E."/>
            <person name="Zhu S."/>
            <person name="Zimmer A."/>
            <person name="Hide W."/>
            <person name="Bult C."/>
            <person name="Grimmond S.M."/>
            <person name="Teasdale R.D."/>
            <person name="Liu E.T."/>
            <person name="Brusic V."/>
            <person name="Quackenbush J."/>
            <person name="Wahlestedt C."/>
            <person name="Mattick J.S."/>
            <person name="Hume D.A."/>
            <person name="Kai C."/>
            <person name="Sasaki D."/>
            <person name="Tomaru Y."/>
            <person name="Fukuda S."/>
            <person name="Kanamori-Katayama M."/>
            <person name="Suzuki M."/>
            <person name="Aoki J."/>
            <person name="Arakawa T."/>
            <person name="Iida J."/>
            <person name="Imamura K."/>
            <person name="Itoh M."/>
            <person name="Kato T."/>
            <person name="Kawaji H."/>
            <person name="Kawagashira N."/>
            <person name="Kawashima T."/>
            <person name="Kojima M."/>
            <person name="Kondo S."/>
            <person name="Konno H."/>
            <person name="Nakano K."/>
            <person name="Ninomiya N."/>
            <person name="Nishio T."/>
            <person name="Okada M."/>
            <person name="Plessy C."/>
            <person name="Shibata K."/>
            <person name="Shiraki T."/>
            <person name="Suzuki S."/>
            <person name="Tagami M."/>
            <person name="Waki K."/>
            <person name="Watahiki A."/>
            <person name="Okamura-Oho Y."/>
            <person name="Suzuki H."/>
            <person name="Kawai J."/>
            <person name="Hayashizaki Y."/>
        </authorList>
    </citation>
    <scope>NUCLEOTIDE SEQUENCE [LARGE SCALE MRNA]</scope>
</reference>
<accession>Q9D9W6</accession>